<reference key="1">
    <citation type="journal article" date="2006" name="Proc. Natl. Acad. Sci. U.S.A.">
        <title>Comparative genomics of the lactic acid bacteria.</title>
        <authorList>
            <person name="Makarova K.S."/>
            <person name="Slesarev A."/>
            <person name="Wolf Y.I."/>
            <person name="Sorokin A."/>
            <person name="Mirkin B."/>
            <person name="Koonin E.V."/>
            <person name="Pavlov A."/>
            <person name="Pavlova N."/>
            <person name="Karamychev V."/>
            <person name="Polouchine N."/>
            <person name="Shakhova V."/>
            <person name="Grigoriev I."/>
            <person name="Lou Y."/>
            <person name="Rohksar D."/>
            <person name="Lucas S."/>
            <person name="Huang K."/>
            <person name="Goodstein D.M."/>
            <person name="Hawkins T."/>
            <person name="Plengvidhya V."/>
            <person name="Welker D."/>
            <person name="Hughes J."/>
            <person name="Goh Y."/>
            <person name="Benson A."/>
            <person name="Baldwin K."/>
            <person name="Lee J.-H."/>
            <person name="Diaz-Muniz I."/>
            <person name="Dosti B."/>
            <person name="Smeianov V."/>
            <person name="Wechter W."/>
            <person name="Barabote R."/>
            <person name="Lorca G."/>
            <person name="Altermann E."/>
            <person name="Barrangou R."/>
            <person name="Ganesan B."/>
            <person name="Xie Y."/>
            <person name="Rawsthorne H."/>
            <person name="Tamir D."/>
            <person name="Parker C."/>
            <person name="Breidt F."/>
            <person name="Broadbent J.R."/>
            <person name="Hutkins R."/>
            <person name="O'Sullivan D."/>
            <person name="Steele J."/>
            <person name="Unlu G."/>
            <person name="Saier M.H. Jr."/>
            <person name="Klaenhammer T."/>
            <person name="Richardson P."/>
            <person name="Kozyavkin S."/>
            <person name="Weimer B.C."/>
            <person name="Mills D.A."/>
        </authorList>
    </citation>
    <scope>NUCLEOTIDE SEQUENCE [LARGE SCALE GENOMIC DNA]</scope>
    <source>
        <strain>SK11</strain>
    </source>
</reference>
<feature type="chain" id="PRO_1000081069" description="Glutamate 5-kinase">
    <location>
        <begin position="1"/>
        <end position="270"/>
    </location>
</feature>
<feature type="binding site" evidence="1">
    <location>
        <position position="17"/>
    </location>
    <ligand>
        <name>ATP</name>
        <dbReference type="ChEBI" id="CHEBI:30616"/>
    </ligand>
</feature>
<feature type="binding site" evidence="1">
    <location>
        <position position="57"/>
    </location>
    <ligand>
        <name>substrate</name>
    </ligand>
</feature>
<feature type="binding site" evidence="1">
    <location>
        <position position="144"/>
    </location>
    <ligand>
        <name>substrate</name>
    </ligand>
</feature>
<feature type="binding site" evidence="1">
    <location>
        <position position="160"/>
    </location>
    <ligand>
        <name>substrate</name>
    </ligand>
</feature>
<feature type="binding site" evidence="1">
    <location>
        <begin position="180"/>
        <end position="181"/>
    </location>
    <ligand>
        <name>ATP</name>
        <dbReference type="ChEBI" id="CHEBI:30616"/>
    </ligand>
</feature>
<feature type="binding site" evidence="1">
    <location>
        <begin position="222"/>
        <end position="228"/>
    </location>
    <ligand>
        <name>ATP</name>
        <dbReference type="ChEBI" id="CHEBI:30616"/>
    </ligand>
</feature>
<comment type="function">
    <text evidence="1">Catalyzes the transfer of a phosphate group to glutamate to form L-glutamate 5-phosphate.</text>
</comment>
<comment type="catalytic activity">
    <reaction evidence="1">
        <text>L-glutamate + ATP = L-glutamyl 5-phosphate + ADP</text>
        <dbReference type="Rhea" id="RHEA:14877"/>
        <dbReference type="ChEBI" id="CHEBI:29985"/>
        <dbReference type="ChEBI" id="CHEBI:30616"/>
        <dbReference type="ChEBI" id="CHEBI:58274"/>
        <dbReference type="ChEBI" id="CHEBI:456216"/>
        <dbReference type="EC" id="2.7.2.11"/>
    </reaction>
</comment>
<comment type="pathway">
    <text evidence="1">Amino-acid biosynthesis; L-proline biosynthesis; L-glutamate 5-semialdehyde from L-glutamate: step 1/2.</text>
</comment>
<comment type="subcellular location">
    <subcellularLocation>
        <location evidence="1">Cytoplasm</location>
    </subcellularLocation>
</comment>
<comment type="similarity">
    <text evidence="1">Belongs to the glutamate 5-kinase family.</text>
</comment>
<proteinExistence type="inferred from homology"/>
<dbReference type="EC" id="2.7.2.11" evidence="1"/>
<dbReference type="EMBL" id="CP000425">
    <property type="protein sequence ID" value="ABJ73213.1"/>
    <property type="molecule type" value="Genomic_DNA"/>
</dbReference>
<dbReference type="SMR" id="Q02XV9"/>
<dbReference type="KEGG" id="llc:LACR_1717"/>
<dbReference type="HOGENOM" id="CLU_025400_0_2_9"/>
<dbReference type="UniPathway" id="UPA00098">
    <property type="reaction ID" value="UER00359"/>
</dbReference>
<dbReference type="Proteomes" id="UP000000240">
    <property type="component" value="Chromosome"/>
</dbReference>
<dbReference type="GO" id="GO:0005829">
    <property type="term" value="C:cytosol"/>
    <property type="evidence" value="ECO:0007669"/>
    <property type="project" value="TreeGrafter"/>
</dbReference>
<dbReference type="GO" id="GO:0005524">
    <property type="term" value="F:ATP binding"/>
    <property type="evidence" value="ECO:0007669"/>
    <property type="project" value="UniProtKB-KW"/>
</dbReference>
<dbReference type="GO" id="GO:0004349">
    <property type="term" value="F:glutamate 5-kinase activity"/>
    <property type="evidence" value="ECO:0007669"/>
    <property type="project" value="UniProtKB-UniRule"/>
</dbReference>
<dbReference type="GO" id="GO:0055129">
    <property type="term" value="P:L-proline biosynthetic process"/>
    <property type="evidence" value="ECO:0007669"/>
    <property type="project" value="UniProtKB-UniRule"/>
</dbReference>
<dbReference type="CDD" id="cd04242">
    <property type="entry name" value="AAK_G5K_ProB"/>
    <property type="match status" value="1"/>
</dbReference>
<dbReference type="FunFam" id="3.40.1160.10:FF:000018">
    <property type="entry name" value="Glutamate 5-kinase"/>
    <property type="match status" value="1"/>
</dbReference>
<dbReference type="Gene3D" id="3.40.1160.10">
    <property type="entry name" value="Acetylglutamate kinase-like"/>
    <property type="match status" value="1"/>
</dbReference>
<dbReference type="HAMAP" id="MF_00456">
    <property type="entry name" value="ProB"/>
    <property type="match status" value="1"/>
</dbReference>
<dbReference type="InterPro" id="IPR036393">
    <property type="entry name" value="AceGlu_kinase-like_sf"/>
</dbReference>
<dbReference type="InterPro" id="IPR001048">
    <property type="entry name" value="Asp/Glu/Uridylate_kinase"/>
</dbReference>
<dbReference type="InterPro" id="IPR041739">
    <property type="entry name" value="G5K_ProB"/>
</dbReference>
<dbReference type="InterPro" id="IPR001057">
    <property type="entry name" value="Glu/AcGlu_kinase"/>
</dbReference>
<dbReference type="InterPro" id="IPR011529">
    <property type="entry name" value="Glu_5kinase"/>
</dbReference>
<dbReference type="InterPro" id="IPR005715">
    <property type="entry name" value="Glu_5kinase/COase_Synthase"/>
</dbReference>
<dbReference type="InterPro" id="IPR019797">
    <property type="entry name" value="Glutamate_5-kinase_CS"/>
</dbReference>
<dbReference type="NCBIfam" id="TIGR01027">
    <property type="entry name" value="proB"/>
    <property type="match status" value="1"/>
</dbReference>
<dbReference type="PANTHER" id="PTHR43654">
    <property type="entry name" value="GLUTAMATE 5-KINASE"/>
    <property type="match status" value="1"/>
</dbReference>
<dbReference type="PANTHER" id="PTHR43654:SF1">
    <property type="entry name" value="ISOPENTENYL PHOSPHATE KINASE"/>
    <property type="match status" value="1"/>
</dbReference>
<dbReference type="Pfam" id="PF00696">
    <property type="entry name" value="AA_kinase"/>
    <property type="match status" value="1"/>
</dbReference>
<dbReference type="PIRSF" id="PIRSF000729">
    <property type="entry name" value="GK"/>
    <property type="match status" value="1"/>
</dbReference>
<dbReference type="PRINTS" id="PR00474">
    <property type="entry name" value="GLU5KINASE"/>
</dbReference>
<dbReference type="SUPFAM" id="SSF53633">
    <property type="entry name" value="Carbamate kinase-like"/>
    <property type="match status" value="1"/>
</dbReference>
<dbReference type="PROSITE" id="PS00902">
    <property type="entry name" value="GLUTAMATE_5_KINASE"/>
    <property type="match status" value="1"/>
</dbReference>
<gene>
    <name evidence="1" type="primary">proB</name>
    <name type="ordered locus">LACR_1717</name>
</gene>
<organism>
    <name type="scientific">Lactococcus lactis subsp. cremoris (strain SK11)</name>
    <dbReference type="NCBI Taxonomy" id="272622"/>
    <lineage>
        <taxon>Bacteria</taxon>
        <taxon>Bacillati</taxon>
        <taxon>Bacillota</taxon>
        <taxon>Bacilli</taxon>
        <taxon>Lactobacillales</taxon>
        <taxon>Streptococcaceae</taxon>
        <taxon>Lactococcus</taxon>
        <taxon>Lactococcus cremoris subsp. cremoris</taxon>
    </lineage>
</organism>
<protein>
    <recommendedName>
        <fullName evidence="1">Glutamate 5-kinase</fullName>
        <ecNumber evidence="1">2.7.2.11</ecNumber>
    </recommendedName>
    <alternativeName>
        <fullName evidence="1">Gamma-glutamyl kinase</fullName>
        <shortName evidence="1">GK</shortName>
    </alternativeName>
</protein>
<keyword id="KW-0028">Amino-acid biosynthesis</keyword>
<keyword id="KW-0067">ATP-binding</keyword>
<keyword id="KW-0963">Cytoplasm</keyword>
<keyword id="KW-0418">Kinase</keyword>
<keyword id="KW-0547">Nucleotide-binding</keyword>
<keyword id="KW-0641">Proline biosynthesis</keyword>
<keyword id="KW-0808">Transferase</keyword>
<evidence type="ECO:0000255" key="1">
    <source>
        <dbReference type="HAMAP-Rule" id="MF_00456"/>
    </source>
</evidence>
<name>PROB_LACLS</name>
<sequence length="270" mass="29893">MIMTRKNILKAQRIVVKIGTSSLILPNGKINLSNIDELAFVLSDLNNKGYEVILVTSGAIGVGLNVLGMNKRPKGIADQQALASIGQVELMSLYTQMFRRYSQKVSQLLLTRDVTDFPTSRENPENALNALLALDIIPIINENDAIAVDEMDHQTKFGDNDKLGAIVSKLVHADLLIMLSDIDGLFDKNPTIYDDAKIFNEIHEITDELRQMAGGAGSRFGTGGMTSKLAAAQILFENDQEMVLTNGERIREIQQIIEGREIGTYFHQKF</sequence>
<accession>Q02XV9</accession>